<comment type="function">
    <text evidence="1">Acts as a chaperone.</text>
</comment>
<comment type="induction">
    <text evidence="1">By stress conditions e.g. heat shock.</text>
</comment>
<comment type="similarity">
    <text evidence="1">Belongs to the heat shock protein 70 family.</text>
</comment>
<accession>Q8FXX2</accession>
<accession>G0K973</accession>
<proteinExistence type="inferred from homology"/>
<protein>
    <recommendedName>
        <fullName evidence="1">Chaperone protein DnaK</fullName>
    </recommendedName>
    <alternativeName>
        <fullName evidence="1">HSP70</fullName>
    </alternativeName>
    <alternativeName>
        <fullName evidence="1">Heat shock 70 kDa protein</fullName>
    </alternativeName>
    <alternativeName>
        <fullName evidence="1">Heat shock protein 70</fullName>
    </alternativeName>
</protein>
<keyword id="KW-0067">ATP-binding</keyword>
<keyword id="KW-0143">Chaperone</keyword>
<keyword id="KW-0547">Nucleotide-binding</keyword>
<keyword id="KW-0597">Phosphoprotein</keyword>
<keyword id="KW-0346">Stress response</keyword>
<gene>
    <name evidence="1" type="primary">dnaK</name>
    <name type="ordered locus">BR2125</name>
    <name type="ordered locus">BS1330_I2119</name>
</gene>
<name>DNAK_BRUSU</name>
<organism>
    <name type="scientific">Brucella suis biovar 1 (strain 1330)</name>
    <dbReference type="NCBI Taxonomy" id="204722"/>
    <lineage>
        <taxon>Bacteria</taxon>
        <taxon>Pseudomonadati</taxon>
        <taxon>Pseudomonadota</taxon>
        <taxon>Alphaproteobacteria</taxon>
        <taxon>Hyphomicrobiales</taxon>
        <taxon>Brucellaceae</taxon>
        <taxon>Brucella/Ochrobactrum group</taxon>
        <taxon>Brucella</taxon>
    </lineage>
</organism>
<evidence type="ECO:0000255" key="1">
    <source>
        <dbReference type="HAMAP-Rule" id="MF_00332"/>
    </source>
</evidence>
<evidence type="ECO:0000256" key="2">
    <source>
        <dbReference type="SAM" id="MobiDB-lite"/>
    </source>
</evidence>
<feature type="chain" id="PRO_0000078432" description="Chaperone protein DnaK">
    <location>
        <begin position="1"/>
        <end position="637"/>
    </location>
</feature>
<feature type="region of interest" description="Disordered" evidence="2">
    <location>
        <begin position="514"/>
        <end position="542"/>
    </location>
</feature>
<feature type="region of interest" description="Disordered" evidence="2">
    <location>
        <begin position="601"/>
        <end position="637"/>
    </location>
</feature>
<feature type="compositionally biased region" description="Basic and acidic residues" evidence="2">
    <location>
        <begin position="514"/>
        <end position="529"/>
    </location>
</feature>
<feature type="compositionally biased region" description="Low complexity" evidence="2">
    <location>
        <begin position="601"/>
        <end position="617"/>
    </location>
</feature>
<feature type="modified residue" description="Phosphothreonine; by autocatalysis" evidence="1">
    <location>
        <position position="198"/>
    </location>
</feature>
<dbReference type="EMBL" id="AE014291">
    <property type="protein sequence ID" value="AAN31015.1"/>
    <property type="molecule type" value="Genomic_DNA"/>
</dbReference>
<dbReference type="EMBL" id="CP002997">
    <property type="protein sequence ID" value="AEM19432.1"/>
    <property type="molecule type" value="Genomic_DNA"/>
</dbReference>
<dbReference type="RefSeq" id="WP_004691170.1">
    <property type="nucleotide sequence ID" value="NZ_KN046804.1"/>
</dbReference>
<dbReference type="SMR" id="Q8FXX2"/>
<dbReference type="GeneID" id="55591691"/>
<dbReference type="KEGG" id="bms:BR2125"/>
<dbReference type="KEGG" id="bsi:BS1330_I2119"/>
<dbReference type="PATRIC" id="fig|204722.21.peg.687"/>
<dbReference type="HOGENOM" id="CLU_005965_3_0_5"/>
<dbReference type="PhylomeDB" id="Q8FXX2"/>
<dbReference type="PRO" id="PR:Q8FXX2"/>
<dbReference type="Proteomes" id="UP000007104">
    <property type="component" value="Chromosome I"/>
</dbReference>
<dbReference type="GO" id="GO:0005524">
    <property type="term" value="F:ATP binding"/>
    <property type="evidence" value="ECO:0007669"/>
    <property type="project" value="UniProtKB-UniRule"/>
</dbReference>
<dbReference type="GO" id="GO:0140662">
    <property type="term" value="F:ATP-dependent protein folding chaperone"/>
    <property type="evidence" value="ECO:0007669"/>
    <property type="project" value="InterPro"/>
</dbReference>
<dbReference type="GO" id="GO:0051082">
    <property type="term" value="F:unfolded protein binding"/>
    <property type="evidence" value="ECO:0007669"/>
    <property type="project" value="InterPro"/>
</dbReference>
<dbReference type="CDD" id="cd11733">
    <property type="entry name" value="ASKHA_NBD_HSP70_HSPA9"/>
    <property type="match status" value="1"/>
</dbReference>
<dbReference type="FunFam" id="2.60.34.10:FF:000014">
    <property type="entry name" value="Chaperone protein DnaK HSP70"/>
    <property type="match status" value="1"/>
</dbReference>
<dbReference type="FunFam" id="3.30.420.40:FF:000020">
    <property type="entry name" value="Chaperone protein HscA homolog"/>
    <property type="match status" value="1"/>
</dbReference>
<dbReference type="FunFam" id="1.20.1270.10:FF:000001">
    <property type="entry name" value="Molecular chaperone DnaK"/>
    <property type="match status" value="1"/>
</dbReference>
<dbReference type="FunFam" id="3.30.420.40:FF:000004">
    <property type="entry name" value="Molecular chaperone DnaK"/>
    <property type="match status" value="1"/>
</dbReference>
<dbReference type="FunFam" id="3.90.640.10:FF:000003">
    <property type="entry name" value="Molecular chaperone DnaK"/>
    <property type="match status" value="1"/>
</dbReference>
<dbReference type="Gene3D" id="1.20.1270.10">
    <property type="match status" value="1"/>
</dbReference>
<dbReference type="Gene3D" id="3.30.420.40">
    <property type="match status" value="2"/>
</dbReference>
<dbReference type="Gene3D" id="3.90.640.10">
    <property type="entry name" value="Actin, Chain A, domain 4"/>
    <property type="match status" value="1"/>
</dbReference>
<dbReference type="Gene3D" id="2.60.34.10">
    <property type="entry name" value="Substrate Binding Domain Of DNAk, Chain A, domain 1"/>
    <property type="match status" value="1"/>
</dbReference>
<dbReference type="HAMAP" id="MF_00332">
    <property type="entry name" value="DnaK"/>
    <property type="match status" value="1"/>
</dbReference>
<dbReference type="InterPro" id="IPR043129">
    <property type="entry name" value="ATPase_NBD"/>
</dbReference>
<dbReference type="InterPro" id="IPR012725">
    <property type="entry name" value="Chaperone_DnaK"/>
</dbReference>
<dbReference type="InterPro" id="IPR018181">
    <property type="entry name" value="Heat_shock_70_CS"/>
</dbReference>
<dbReference type="InterPro" id="IPR029048">
    <property type="entry name" value="HSP70_C_sf"/>
</dbReference>
<dbReference type="InterPro" id="IPR029047">
    <property type="entry name" value="HSP70_peptide-bd_sf"/>
</dbReference>
<dbReference type="InterPro" id="IPR013126">
    <property type="entry name" value="Hsp_70_fam"/>
</dbReference>
<dbReference type="NCBIfam" id="NF001413">
    <property type="entry name" value="PRK00290.1"/>
    <property type="match status" value="1"/>
</dbReference>
<dbReference type="NCBIfam" id="NF003520">
    <property type="entry name" value="PRK05183.1"/>
    <property type="match status" value="1"/>
</dbReference>
<dbReference type="NCBIfam" id="TIGR02350">
    <property type="entry name" value="prok_dnaK"/>
    <property type="match status" value="1"/>
</dbReference>
<dbReference type="PANTHER" id="PTHR19375">
    <property type="entry name" value="HEAT SHOCK PROTEIN 70KDA"/>
    <property type="match status" value="1"/>
</dbReference>
<dbReference type="Pfam" id="PF00012">
    <property type="entry name" value="HSP70"/>
    <property type="match status" value="1"/>
</dbReference>
<dbReference type="PRINTS" id="PR00301">
    <property type="entry name" value="HEATSHOCK70"/>
</dbReference>
<dbReference type="SUPFAM" id="SSF53067">
    <property type="entry name" value="Actin-like ATPase domain"/>
    <property type="match status" value="2"/>
</dbReference>
<dbReference type="SUPFAM" id="SSF100934">
    <property type="entry name" value="Heat shock protein 70kD (HSP70), C-terminal subdomain"/>
    <property type="match status" value="1"/>
</dbReference>
<dbReference type="SUPFAM" id="SSF100920">
    <property type="entry name" value="Heat shock protein 70kD (HSP70), peptide-binding domain"/>
    <property type="match status" value="1"/>
</dbReference>
<dbReference type="PROSITE" id="PS00297">
    <property type="entry name" value="HSP70_1"/>
    <property type="match status" value="1"/>
</dbReference>
<dbReference type="PROSITE" id="PS00329">
    <property type="entry name" value="HSP70_2"/>
    <property type="match status" value="1"/>
</dbReference>
<dbReference type="PROSITE" id="PS01036">
    <property type="entry name" value="HSP70_3"/>
    <property type="match status" value="1"/>
</dbReference>
<sequence>MAKVIGIDLGTTNSCVAVMDGKNAKVIENAEGARTTPSIIAFTDGDERLAGQPAKRQAVTNPEGTLFAVKRLIGRRYDDPMVTKDKDLVPYKIVKGDNGDAWVEVHGKKYSPSQISAMILQKMKETAESYLGETVTQAVITVPAYFNDAQRQATKDAGKIAGLEVLRIINEPTAAALAYGLDKSEGKTIAVYDLGGGTFDVSVLEIGDGVFEVKSTNGDTFLGGEDFDIRLVEYLVAEFKKESGIDLKNDKLALQRLKEAAEKAKIELSSSQQTEINLPFITADQTGPKHLAIKLSRAKFESLVDDLVQRTVEPCKAALKDAGLKAGEIDEVVLVGGMTRMPKIQEVVKAFFGKEPHKGVNPDEVVAMGAAIQGGVLQGDVKDVLLLDVTPLSLGIETLGGVFTRLIERNTTIPTKKSQTFSTAEDNQSAVTIRVFQGEREMAADNKLLGQFDLVGIPPAPRGVPQIEVTFDIDANGIVNVSAKDKGTGKEHQIRIQASGGLTDADIEKMVKDAEANAEADKKRRESVEAKNQAESLVHSTEKSLAEYGDKVSADDKKAIEDAIAALKTSLEGEDAEDIKAKTQALAEVSMKLGQAMYEAAQAAEGAGAEGGEQASSSKDDVVDADYEEIDDNKKSS</sequence>
<reference key="1">
    <citation type="journal article" date="2002" name="Proc. Natl. Acad. Sci. U.S.A.">
        <title>The Brucella suis genome reveals fundamental similarities between animal and plant pathogens and symbionts.</title>
        <authorList>
            <person name="Paulsen I.T."/>
            <person name="Seshadri R."/>
            <person name="Nelson K.E."/>
            <person name="Eisen J.A."/>
            <person name="Heidelberg J.F."/>
            <person name="Read T.D."/>
            <person name="Dodson R.J."/>
            <person name="Umayam L.A."/>
            <person name="Brinkac L.M."/>
            <person name="Beanan M.J."/>
            <person name="Daugherty S.C."/>
            <person name="DeBoy R.T."/>
            <person name="Durkin A.S."/>
            <person name="Kolonay J.F."/>
            <person name="Madupu R."/>
            <person name="Nelson W.C."/>
            <person name="Ayodeji B."/>
            <person name="Kraul M."/>
            <person name="Shetty J."/>
            <person name="Malek J.A."/>
            <person name="Van Aken S.E."/>
            <person name="Riedmuller S."/>
            <person name="Tettelin H."/>
            <person name="Gill S.R."/>
            <person name="White O."/>
            <person name="Salzberg S.L."/>
            <person name="Hoover D.L."/>
            <person name="Lindler L.E."/>
            <person name="Halling S.M."/>
            <person name="Boyle S.M."/>
            <person name="Fraser C.M."/>
        </authorList>
    </citation>
    <scope>NUCLEOTIDE SEQUENCE [LARGE SCALE GENOMIC DNA]</scope>
    <source>
        <strain>1330</strain>
    </source>
</reference>
<reference key="2">
    <citation type="journal article" date="2011" name="J. Bacteriol.">
        <title>Revised genome sequence of Brucella suis 1330.</title>
        <authorList>
            <person name="Tae H."/>
            <person name="Shallom S."/>
            <person name="Settlage R."/>
            <person name="Preston D."/>
            <person name="Adams L.G."/>
            <person name="Garner H.R."/>
        </authorList>
    </citation>
    <scope>NUCLEOTIDE SEQUENCE [LARGE SCALE GENOMIC DNA]</scope>
    <source>
        <strain>1330</strain>
    </source>
</reference>